<protein>
    <recommendedName>
        <fullName evidence="1">Aspartate--tRNA ligase</fullName>
        <ecNumber evidence="1">6.1.1.12</ecNumber>
    </recommendedName>
    <alternativeName>
        <fullName evidence="1">Aspartyl-tRNA synthetase</fullName>
        <shortName evidence="1">AspRS</shortName>
    </alternativeName>
</protein>
<sequence>MRTEYCGQLRLSHVGQQVTLCGWVNRRRDLGSLIFIDMRDREGIVQVFFDPDRADALKLASELRNEFCIQVTGTVRARDAKNVNADMATGEIEVLASSLTIINRADSLPLDANHINTEEARLKYRYLDLRRPEMAQRLKTRAKITSLVRRFMDDHGFLDIETPMLTKATPEGARDYLVPSRVHKGKFYALPQSPQLFKQLLMMSGFDRYYQIVKCFRDEDLRADRQPEFTQIDVETSFMTAPQVREVMEALVRHLWLEVKDVDLGDFPVMTFAEAERRYGSDKPDLRNPMELVDVADLLKSVEFAVFAGPANDPKGRVAALRVPGGAQLSRKQIDDYGNFVKIYGAKGLAYIKVNDRAKGLDGITSPVAKFLSTEIVEAILARTGAQNGDMIFFGADNKKVVADALGALRLKLGKDLSLTDEDKWAPLWVIDFPMFEDDGEGGLTAMHHPFTAPRDMTASELKAAPENAVANAYDMVINGYEVGGGSVRIHNGEMQQTVFGILGINEQEQREKFGFLLDALKYGTPPHAGLAFGLDRLTMLLTGTDNIRDVIAFPKTTAAACLMTEAPSFANQAALTELGIQVVKKAENN</sequence>
<keyword id="KW-0030">Aminoacyl-tRNA synthetase</keyword>
<keyword id="KW-0067">ATP-binding</keyword>
<keyword id="KW-0963">Cytoplasm</keyword>
<keyword id="KW-0436">Ligase</keyword>
<keyword id="KW-0547">Nucleotide-binding</keyword>
<keyword id="KW-0648">Protein biosynthesis</keyword>
<keyword id="KW-1185">Reference proteome</keyword>
<comment type="function">
    <text evidence="1">Catalyzes the attachment of L-aspartate to tRNA(Asp) in a two-step reaction: L-aspartate is first activated by ATP to form Asp-AMP and then transferred to the acceptor end of tRNA(Asp).</text>
</comment>
<comment type="catalytic activity">
    <reaction evidence="1">
        <text>tRNA(Asp) + L-aspartate + ATP = L-aspartyl-tRNA(Asp) + AMP + diphosphate</text>
        <dbReference type="Rhea" id="RHEA:19649"/>
        <dbReference type="Rhea" id="RHEA-COMP:9660"/>
        <dbReference type="Rhea" id="RHEA-COMP:9678"/>
        <dbReference type="ChEBI" id="CHEBI:29991"/>
        <dbReference type="ChEBI" id="CHEBI:30616"/>
        <dbReference type="ChEBI" id="CHEBI:33019"/>
        <dbReference type="ChEBI" id="CHEBI:78442"/>
        <dbReference type="ChEBI" id="CHEBI:78516"/>
        <dbReference type="ChEBI" id="CHEBI:456215"/>
        <dbReference type="EC" id="6.1.1.12"/>
    </reaction>
</comment>
<comment type="subunit">
    <text evidence="1">Homodimer.</text>
</comment>
<comment type="subcellular location">
    <subcellularLocation>
        <location evidence="1">Cytoplasm</location>
    </subcellularLocation>
</comment>
<comment type="similarity">
    <text evidence="1">Belongs to the class-II aminoacyl-tRNA synthetase family. Type 1 subfamily.</text>
</comment>
<dbReference type="EC" id="6.1.1.12" evidence="1"/>
<dbReference type="EMBL" id="CP000880">
    <property type="protein sequence ID" value="ABX20955.1"/>
    <property type="molecule type" value="Genomic_DNA"/>
</dbReference>
<dbReference type="SMR" id="A9MND2"/>
<dbReference type="STRING" id="41514.SARI_01047"/>
<dbReference type="KEGG" id="ses:SARI_01047"/>
<dbReference type="HOGENOM" id="CLU_014330_3_2_6"/>
<dbReference type="Proteomes" id="UP000002084">
    <property type="component" value="Chromosome"/>
</dbReference>
<dbReference type="GO" id="GO:0005737">
    <property type="term" value="C:cytoplasm"/>
    <property type="evidence" value="ECO:0007669"/>
    <property type="project" value="UniProtKB-SubCell"/>
</dbReference>
<dbReference type="GO" id="GO:0004815">
    <property type="term" value="F:aspartate-tRNA ligase activity"/>
    <property type="evidence" value="ECO:0007669"/>
    <property type="project" value="UniProtKB-UniRule"/>
</dbReference>
<dbReference type="GO" id="GO:0005524">
    <property type="term" value="F:ATP binding"/>
    <property type="evidence" value="ECO:0007669"/>
    <property type="project" value="UniProtKB-UniRule"/>
</dbReference>
<dbReference type="GO" id="GO:0003676">
    <property type="term" value="F:nucleic acid binding"/>
    <property type="evidence" value="ECO:0007669"/>
    <property type="project" value="InterPro"/>
</dbReference>
<dbReference type="GO" id="GO:0006422">
    <property type="term" value="P:aspartyl-tRNA aminoacylation"/>
    <property type="evidence" value="ECO:0007669"/>
    <property type="project" value="UniProtKB-UniRule"/>
</dbReference>
<dbReference type="CDD" id="cd00777">
    <property type="entry name" value="AspRS_core"/>
    <property type="match status" value="1"/>
</dbReference>
<dbReference type="CDD" id="cd04317">
    <property type="entry name" value="EcAspRS_like_N"/>
    <property type="match status" value="1"/>
</dbReference>
<dbReference type="FunFam" id="2.40.50.140:FF:000080">
    <property type="entry name" value="Aspartate--tRNA ligase"/>
    <property type="match status" value="1"/>
</dbReference>
<dbReference type="FunFam" id="3.30.1360.30:FF:000001">
    <property type="entry name" value="Aspartate--tRNA ligase"/>
    <property type="match status" value="1"/>
</dbReference>
<dbReference type="Gene3D" id="3.30.930.10">
    <property type="entry name" value="Bira Bifunctional Protein, Domain 2"/>
    <property type="match status" value="1"/>
</dbReference>
<dbReference type="Gene3D" id="3.30.1360.30">
    <property type="entry name" value="GAD-like domain"/>
    <property type="match status" value="1"/>
</dbReference>
<dbReference type="Gene3D" id="2.40.50.140">
    <property type="entry name" value="Nucleic acid-binding proteins"/>
    <property type="match status" value="1"/>
</dbReference>
<dbReference type="HAMAP" id="MF_00044">
    <property type="entry name" value="Asp_tRNA_synth_type1"/>
    <property type="match status" value="1"/>
</dbReference>
<dbReference type="InterPro" id="IPR004364">
    <property type="entry name" value="Aa-tRNA-synt_II"/>
</dbReference>
<dbReference type="InterPro" id="IPR006195">
    <property type="entry name" value="aa-tRNA-synth_II"/>
</dbReference>
<dbReference type="InterPro" id="IPR045864">
    <property type="entry name" value="aa-tRNA-synth_II/BPL/LPL"/>
</dbReference>
<dbReference type="InterPro" id="IPR004524">
    <property type="entry name" value="Asp-tRNA-ligase_1"/>
</dbReference>
<dbReference type="InterPro" id="IPR047089">
    <property type="entry name" value="Asp-tRNA-ligase_1_N"/>
</dbReference>
<dbReference type="InterPro" id="IPR002312">
    <property type="entry name" value="Asp/Asn-tRNA-synth_IIb"/>
</dbReference>
<dbReference type="InterPro" id="IPR047090">
    <property type="entry name" value="AspRS_core"/>
</dbReference>
<dbReference type="InterPro" id="IPR004115">
    <property type="entry name" value="GAD-like_sf"/>
</dbReference>
<dbReference type="InterPro" id="IPR029351">
    <property type="entry name" value="GAD_dom"/>
</dbReference>
<dbReference type="InterPro" id="IPR012340">
    <property type="entry name" value="NA-bd_OB-fold"/>
</dbReference>
<dbReference type="InterPro" id="IPR004365">
    <property type="entry name" value="NA-bd_OB_tRNA"/>
</dbReference>
<dbReference type="NCBIfam" id="TIGR00459">
    <property type="entry name" value="aspS_bact"/>
    <property type="match status" value="1"/>
</dbReference>
<dbReference type="NCBIfam" id="NF001750">
    <property type="entry name" value="PRK00476.1"/>
    <property type="match status" value="1"/>
</dbReference>
<dbReference type="PANTHER" id="PTHR22594:SF5">
    <property type="entry name" value="ASPARTATE--TRNA LIGASE, MITOCHONDRIAL"/>
    <property type="match status" value="1"/>
</dbReference>
<dbReference type="PANTHER" id="PTHR22594">
    <property type="entry name" value="ASPARTYL/LYSYL-TRNA SYNTHETASE"/>
    <property type="match status" value="1"/>
</dbReference>
<dbReference type="Pfam" id="PF02938">
    <property type="entry name" value="GAD"/>
    <property type="match status" value="1"/>
</dbReference>
<dbReference type="Pfam" id="PF00152">
    <property type="entry name" value="tRNA-synt_2"/>
    <property type="match status" value="1"/>
</dbReference>
<dbReference type="Pfam" id="PF01336">
    <property type="entry name" value="tRNA_anti-codon"/>
    <property type="match status" value="1"/>
</dbReference>
<dbReference type="PRINTS" id="PR01042">
    <property type="entry name" value="TRNASYNTHASP"/>
</dbReference>
<dbReference type="SUPFAM" id="SSF55681">
    <property type="entry name" value="Class II aaRS and biotin synthetases"/>
    <property type="match status" value="1"/>
</dbReference>
<dbReference type="SUPFAM" id="SSF55261">
    <property type="entry name" value="GAD domain-like"/>
    <property type="match status" value="1"/>
</dbReference>
<dbReference type="SUPFAM" id="SSF50249">
    <property type="entry name" value="Nucleic acid-binding proteins"/>
    <property type="match status" value="1"/>
</dbReference>
<dbReference type="PROSITE" id="PS50862">
    <property type="entry name" value="AA_TRNA_LIGASE_II"/>
    <property type="match status" value="1"/>
</dbReference>
<gene>
    <name evidence="1" type="primary">aspS</name>
    <name type="ordered locus">SARI_01047</name>
</gene>
<proteinExistence type="inferred from homology"/>
<name>SYD_SALAR</name>
<feature type="chain" id="PRO_1000074717" description="Aspartate--tRNA ligase">
    <location>
        <begin position="1"/>
        <end position="590"/>
    </location>
</feature>
<feature type="region of interest" description="Aspartate" evidence="1">
    <location>
        <begin position="195"/>
        <end position="198"/>
    </location>
</feature>
<feature type="binding site" evidence="1">
    <location>
        <position position="171"/>
    </location>
    <ligand>
        <name>L-aspartate</name>
        <dbReference type="ChEBI" id="CHEBI:29991"/>
    </ligand>
</feature>
<feature type="binding site" evidence="1">
    <location>
        <begin position="217"/>
        <end position="219"/>
    </location>
    <ligand>
        <name>ATP</name>
        <dbReference type="ChEBI" id="CHEBI:30616"/>
    </ligand>
</feature>
<feature type="binding site" evidence="1">
    <location>
        <position position="217"/>
    </location>
    <ligand>
        <name>L-aspartate</name>
        <dbReference type="ChEBI" id="CHEBI:29991"/>
    </ligand>
</feature>
<feature type="binding site" evidence="1">
    <location>
        <position position="226"/>
    </location>
    <ligand>
        <name>ATP</name>
        <dbReference type="ChEBI" id="CHEBI:30616"/>
    </ligand>
</feature>
<feature type="binding site" evidence="1">
    <location>
        <position position="448"/>
    </location>
    <ligand>
        <name>L-aspartate</name>
        <dbReference type="ChEBI" id="CHEBI:29991"/>
    </ligand>
</feature>
<feature type="binding site" evidence="1">
    <location>
        <position position="482"/>
    </location>
    <ligand>
        <name>ATP</name>
        <dbReference type="ChEBI" id="CHEBI:30616"/>
    </ligand>
</feature>
<feature type="binding site" evidence="1">
    <location>
        <position position="489"/>
    </location>
    <ligand>
        <name>L-aspartate</name>
        <dbReference type="ChEBI" id="CHEBI:29991"/>
    </ligand>
</feature>
<feature type="binding site" evidence="1">
    <location>
        <begin position="534"/>
        <end position="537"/>
    </location>
    <ligand>
        <name>ATP</name>
        <dbReference type="ChEBI" id="CHEBI:30616"/>
    </ligand>
</feature>
<evidence type="ECO:0000255" key="1">
    <source>
        <dbReference type="HAMAP-Rule" id="MF_00044"/>
    </source>
</evidence>
<organism>
    <name type="scientific">Salmonella arizonae (strain ATCC BAA-731 / CDC346-86 / RSK2980)</name>
    <dbReference type="NCBI Taxonomy" id="41514"/>
    <lineage>
        <taxon>Bacteria</taxon>
        <taxon>Pseudomonadati</taxon>
        <taxon>Pseudomonadota</taxon>
        <taxon>Gammaproteobacteria</taxon>
        <taxon>Enterobacterales</taxon>
        <taxon>Enterobacteriaceae</taxon>
        <taxon>Salmonella</taxon>
    </lineage>
</organism>
<accession>A9MND2</accession>
<reference key="1">
    <citation type="submission" date="2007-11" db="EMBL/GenBank/DDBJ databases">
        <authorList>
            <consortium name="The Salmonella enterica serovar Arizonae Genome Sequencing Project"/>
            <person name="McClelland M."/>
            <person name="Sanderson E.K."/>
            <person name="Porwollik S."/>
            <person name="Spieth J."/>
            <person name="Clifton W.S."/>
            <person name="Fulton R."/>
            <person name="Chunyan W."/>
            <person name="Wollam A."/>
            <person name="Shah N."/>
            <person name="Pepin K."/>
            <person name="Bhonagiri V."/>
            <person name="Nash W."/>
            <person name="Johnson M."/>
            <person name="Thiruvilangam P."/>
            <person name="Wilson R."/>
        </authorList>
    </citation>
    <scope>NUCLEOTIDE SEQUENCE [LARGE SCALE GENOMIC DNA]</scope>
    <source>
        <strain>ATCC BAA-731 / CDC346-86 / RSK2980</strain>
    </source>
</reference>